<name>METXA_LISIN</name>
<keyword id="KW-0012">Acyltransferase</keyword>
<keyword id="KW-0028">Amino-acid biosynthesis</keyword>
<keyword id="KW-0963">Cytoplasm</keyword>
<keyword id="KW-0486">Methionine biosynthesis</keyword>
<keyword id="KW-0808">Transferase</keyword>
<gene>
    <name evidence="1" type="primary">metXA</name>
    <name type="ordered locus">lin0603</name>
</gene>
<feature type="chain" id="PRO_0000155724" description="Homoserine O-acetyltransferase">
    <location>
        <begin position="1"/>
        <end position="368"/>
    </location>
</feature>
<feature type="domain" description="AB hydrolase-1" evidence="1">
    <location>
        <begin position="43"/>
        <end position="346"/>
    </location>
</feature>
<feature type="active site" description="Nucleophile" evidence="1">
    <location>
        <position position="145"/>
    </location>
</feature>
<feature type="active site" evidence="1">
    <location>
        <position position="307"/>
    </location>
</feature>
<feature type="active site" evidence="1">
    <location>
        <position position="340"/>
    </location>
</feature>
<feature type="binding site" evidence="1">
    <location>
        <position position="212"/>
    </location>
    <ligand>
        <name>substrate</name>
    </ligand>
</feature>
<feature type="binding site" evidence="1">
    <location>
        <position position="341"/>
    </location>
    <ligand>
        <name>substrate</name>
    </ligand>
</feature>
<proteinExistence type="inferred from homology"/>
<comment type="function">
    <text evidence="1">Transfers an acetyl group from acetyl-CoA to L-homoserine, forming acetyl-L-homoserine.</text>
</comment>
<comment type="catalytic activity">
    <reaction evidence="1">
        <text>L-homoserine + acetyl-CoA = O-acetyl-L-homoserine + CoA</text>
        <dbReference type="Rhea" id="RHEA:13701"/>
        <dbReference type="ChEBI" id="CHEBI:57287"/>
        <dbReference type="ChEBI" id="CHEBI:57288"/>
        <dbReference type="ChEBI" id="CHEBI:57476"/>
        <dbReference type="ChEBI" id="CHEBI:57716"/>
        <dbReference type="EC" id="2.3.1.31"/>
    </reaction>
</comment>
<comment type="pathway">
    <text evidence="1">Amino-acid biosynthesis; L-methionine biosynthesis via de novo pathway; O-acetyl-L-homoserine from L-homoserine: step 1/1.</text>
</comment>
<comment type="subunit">
    <text evidence="1">Homodimer.</text>
</comment>
<comment type="subcellular location">
    <subcellularLocation>
        <location evidence="1">Cytoplasm</location>
    </subcellularLocation>
</comment>
<comment type="similarity">
    <text evidence="1">Belongs to the AB hydrolase superfamily. MetX family.</text>
</comment>
<reference key="1">
    <citation type="journal article" date="2001" name="Science">
        <title>Comparative genomics of Listeria species.</title>
        <authorList>
            <person name="Glaser P."/>
            <person name="Frangeul L."/>
            <person name="Buchrieser C."/>
            <person name="Rusniok C."/>
            <person name="Amend A."/>
            <person name="Baquero F."/>
            <person name="Berche P."/>
            <person name="Bloecker H."/>
            <person name="Brandt P."/>
            <person name="Chakraborty T."/>
            <person name="Charbit A."/>
            <person name="Chetouani F."/>
            <person name="Couve E."/>
            <person name="de Daruvar A."/>
            <person name="Dehoux P."/>
            <person name="Domann E."/>
            <person name="Dominguez-Bernal G."/>
            <person name="Duchaud E."/>
            <person name="Durant L."/>
            <person name="Dussurget O."/>
            <person name="Entian K.-D."/>
            <person name="Fsihi H."/>
            <person name="Garcia-del Portillo F."/>
            <person name="Garrido P."/>
            <person name="Gautier L."/>
            <person name="Goebel W."/>
            <person name="Gomez-Lopez N."/>
            <person name="Hain T."/>
            <person name="Hauf J."/>
            <person name="Jackson D."/>
            <person name="Jones L.-M."/>
            <person name="Kaerst U."/>
            <person name="Kreft J."/>
            <person name="Kuhn M."/>
            <person name="Kunst F."/>
            <person name="Kurapkat G."/>
            <person name="Madueno E."/>
            <person name="Maitournam A."/>
            <person name="Mata Vicente J."/>
            <person name="Ng E."/>
            <person name="Nedjari H."/>
            <person name="Nordsiek G."/>
            <person name="Novella S."/>
            <person name="de Pablos B."/>
            <person name="Perez-Diaz J.-C."/>
            <person name="Purcell R."/>
            <person name="Remmel B."/>
            <person name="Rose M."/>
            <person name="Schlueter T."/>
            <person name="Simoes N."/>
            <person name="Tierrez A."/>
            <person name="Vazquez-Boland J.-A."/>
            <person name="Voss H."/>
            <person name="Wehland J."/>
            <person name="Cossart P."/>
        </authorList>
    </citation>
    <scope>NUCLEOTIDE SEQUENCE [LARGE SCALE GENOMIC DNA]</scope>
    <source>
        <strain>ATCC BAA-680 / CLIP 11262</strain>
    </source>
</reference>
<organism>
    <name type="scientific">Listeria innocua serovar 6a (strain ATCC BAA-680 / CLIP 11262)</name>
    <dbReference type="NCBI Taxonomy" id="272626"/>
    <lineage>
        <taxon>Bacteria</taxon>
        <taxon>Bacillati</taxon>
        <taxon>Bacillota</taxon>
        <taxon>Bacilli</taxon>
        <taxon>Bacillales</taxon>
        <taxon>Listeriaceae</taxon>
        <taxon>Listeria</taxon>
    </lineage>
</organism>
<evidence type="ECO:0000255" key="1">
    <source>
        <dbReference type="HAMAP-Rule" id="MF_00296"/>
    </source>
</evidence>
<protein>
    <recommendedName>
        <fullName evidence="1">Homoserine O-acetyltransferase</fullName>
        <shortName evidence="1">HAT</shortName>
        <ecNumber evidence="1">2.3.1.31</ecNumber>
    </recommendedName>
    <alternativeName>
        <fullName evidence="1">Homoserine transacetylase</fullName>
        <shortName evidence="1">HTA</shortName>
    </alternativeName>
</protein>
<dbReference type="EC" id="2.3.1.31" evidence="1"/>
<dbReference type="EMBL" id="AL596165">
    <property type="protein sequence ID" value="CAC95835.1"/>
    <property type="molecule type" value="Genomic_DNA"/>
</dbReference>
<dbReference type="PIR" id="AC1508">
    <property type="entry name" value="AC1508"/>
</dbReference>
<dbReference type="RefSeq" id="WP_003760766.1">
    <property type="nucleotide sequence ID" value="NC_003212.1"/>
</dbReference>
<dbReference type="SMR" id="Q92E58"/>
<dbReference type="STRING" id="272626.gene:17564929"/>
<dbReference type="ESTHER" id="lismo-metx">
    <property type="family name" value="Homoserine_transacetylase"/>
</dbReference>
<dbReference type="GeneID" id="93234051"/>
<dbReference type="KEGG" id="lin:lin0603"/>
<dbReference type="eggNOG" id="COG2021">
    <property type="taxonomic scope" value="Bacteria"/>
</dbReference>
<dbReference type="HOGENOM" id="CLU_028760_1_2_9"/>
<dbReference type="OrthoDB" id="9800754at2"/>
<dbReference type="UniPathway" id="UPA00051">
    <property type="reaction ID" value="UER00074"/>
</dbReference>
<dbReference type="Proteomes" id="UP000002513">
    <property type="component" value="Chromosome"/>
</dbReference>
<dbReference type="GO" id="GO:0005737">
    <property type="term" value="C:cytoplasm"/>
    <property type="evidence" value="ECO:0007669"/>
    <property type="project" value="UniProtKB-SubCell"/>
</dbReference>
<dbReference type="GO" id="GO:0004414">
    <property type="term" value="F:homoserine O-acetyltransferase activity"/>
    <property type="evidence" value="ECO:0007669"/>
    <property type="project" value="UniProtKB-UniRule"/>
</dbReference>
<dbReference type="GO" id="GO:0009092">
    <property type="term" value="P:homoserine metabolic process"/>
    <property type="evidence" value="ECO:0007669"/>
    <property type="project" value="TreeGrafter"/>
</dbReference>
<dbReference type="GO" id="GO:0009086">
    <property type="term" value="P:methionine biosynthetic process"/>
    <property type="evidence" value="ECO:0007669"/>
    <property type="project" value="UniProtKB-UniRule"/>
</dbReference>
<dbReference type="FunFam" id="1.10.1740.110:FF:000001">
    <property type="entry name" value="Homoserine O-acetyltransferase"/>
    <property type="match status" value="1"/>
</dbReference>
<dbReference type="Gene3D" id="1.10.1740.110">
    <property type="match status" value="1"/>
</dbReference>
<dbReference type="Gene3D" id="3.40.50.1820">
    <property type="entry name" value="alpha/beta hydrolase"/>
    <property type="match status" value="1"/>
</dbReference>
<dbReference type="HAMAP" id="MF_00296">
    <property type="entry name" value="MetX_acyltransf"/>
    <property type="match status" value="1"/>
</dbReference>
<dbReference type="InterPro" id="IPR000073">
    <property type="entry name" value="AB_hydrolase_1"/>
</dbReference>
<dbReference type="InterPro" id="IPR029058">
    <property type="entry name" value="AB_hydrolase_fold"/>
</dbReference>
<dbReference type="InterPro" id="IPR008220">
    <property type="entry name" value="HAT_MetX-like"/>
</dbReference>
<dbReference type="NCBIfam" id="TIGR01392">
    <property type="entry name" value="homoserO_Ac_trn"/>
    <property type="match status" value="1"/>
</dbReference>
<dbReference type="NCBIfam" id="NF001209">
    <property type="entry name" value="PRK00175.1"/>
    <property type="match status" value="1"/>
</dbReference>
<dbReference type="PANTHER" id="PTHR32268">
    <property type="entry name" value="HOMOSERINE O-ACETYLTRANSFERASE"/>
    <property type="match status" value="1"/>
</dbReference>
<dbReference type="PANTHER" id="PTHR32268:SF11">
    <property type="entry name" value="HOMOSERINE O-ACETYLTRANSFERASE"/>
    <property type="match status" value="1"/>
</dbReference>
<dbReference type="Pfam" id="PF00561">
    <property type="entry name" value="Abhydrolase_1"/>
    <property type="match status" value="1"/>
</dbReference>
<dbReference type="PIRSF" id="PIRSF000443">
    <property type="entry name" value="Homoser_Ac_trans"/>
    <property type="match status" value="1"/>
</dbReference>
<dbReference type="SUPFAM" id="SSF53474">
    <property type="entry name" value="alpha/beta-Hydrolases"/>
    <property type="match status" value="1"/>
</dbReference>
<accession>Q92E58</accession>
<sequence length="368" mass="40991">MTLQQKELFQKSPLLLENGETLSPVLVGYETYGTLSASRDNCILLEHALTGTAHAAKHFEDDAPGWWDDYIGPGKTIDTDKYFLVCTNVFGGCSGTTGPSSINPKTGEPFRLQFPGFSIKDIIKVQRELLEQLGVTRIVSVIGGSMGGMQATEWAIDYADITDSIINIASPLAAGPDAIGYNLIMRMAILNDPDFNGGNYIGQPEGGLATARMVGMMTYRTSELFSKRFERFTVAESSPAAFSKEHFQIESYLQYQGDTFVERFDANSYLYLTKAIDLFDVTAPAKDDLPAFSKIKIPYLLIGITTDQLFRIHDLRRGYELLKEWDVPVTYHEVASEYGHDAFLVEKEVPKFEPLIRSFLNNLPVKSI</sequence>